<proteinExistence type="evidence at transcript level"/>
<comment type="function">
    <text evidence="1">Snake venom endo-hyaluronidase that degrades hyaluronan to smaller oligosaccharide fragments. In venom, it is not toxic by itself, but increases the diffusion of other venom proteins by degrading the extracellular matrix. In addition, it displays antiedematogenic activity (By similarity).</text>
</comment>
<comment type="catalytic activity">
    <reaction>
        <text>Random hydrolysis of (1-&gt;4)-linkages between N-acetyl-beta-D-glucosamine and D-glucuronate residues in hyaluronate.</text>
        <dbReference type="EC" id="3.2.1.35"/>
    </reaction>
</comment>
<comment type="subunit">
    <text evidence="1">Monomer.</text>
</comment>
<comment type="subcellular location">
    <subcellularLocation>
        <location evidence="1">Secreted</location>
    </subcellularLocation>
</comment>
<comment type="tissue specificity">
    <text>Expressed by the venom gland.</text>
</comment>
<comment type="similarity">
    <text evidence="3">Belongs to the glycosyl hydrolase 56 family.</text>
</comment>
<dbReference type="EC" id="3.2.1.35"/>
<dbReference type="EMBL" id="DQ840256">
    <property type="protein sequence ID" value="ABI33944.1"/>
    <property type="molecule type" value="mRNA"/>
</dbReference>
<dbReference type="SMR" id="A3QVN9"/>
<dbReference type="CAZy" id="GH56">
    <property type="family name" value="Glycoside Hydrolase Family 56"/>
</dbReference>
<dbReference type="GO" id="GO:0031410">
    <property type="term" value="C:cytoplasmic vesicle"/>
    <property type="evidence" value="ECO:0007669"/>
    <property type="project" value="TreeGrafter"/>
</dbReference>
<dbReference type="GO" id="GO:0005576">
    <property type="term" value="C:extracellular region"/>
    <property type="evidence" value="ECO:0007669"/>
    <property type="project" value="UniProtKB-SubCell"/>
</dbReference>
<dbReference type="GO" id="GO:0004415">
    <property type="term" value="F:hyalurononglucosaminidase activity"/>
    <property type="evidence" value="ECO:0007669"/>
    <property type="project" value="UniProtKB-EC"/>
</dbReference>
<dbReference type="GO" id="GO:0005975">
    <property type="term" value="P:carbohydrate metabolic process"/>
    <property type="evidence" value="ECO:0007669"/>
    <property type="project" value="InterPro"/>
</dbReference>
<dbReference type="GO" id="GO:0030214">
    <property type="term" value="P:hyaluronan catabolic process"/>
    <property type="evidence" value="ECO:0007669"/>
    <property type="project" value="TreeGrafter"/>
</dbReference>
<dbReference type="FunFam" id="3.20.20.70:FF:000065">
    <property type="entry name" value="Hyaluronidase"/>
    <property type="match status" value="1"/>
</dbReference>
<dbReference type="Gene3D" id="3.20.20.70">
    <property type="entry name" value="Aldolase class I"/>
    <property type="match status" value="1"/>
</dbReference>
<dbReference type="InterPro" id="IPR013785">
    <property type="entry name" value="Aldolase_TIM"/>
</dbReference>
<dbReference type="InterPro" id="IPR017853">
    <property type="entry name" value="Glycoside_hydrolase_SF"/>
</dbReference>
<dbReference type="InterPro" id="IPR018155">
    <property type="entry name" value="Hyaluronidase"/>
</dbReference>
<dbReference type="PANTHER" id="PTHR11769">
    <property type="entry name" value="HYALURONIDASE"/>
    <property type="match status" value="1"/>
</dbReference>
<dbReference type="PANTHER" id="PTHR11769:SF9">
    <property type="entry name" value="HYALURONIDASE"/>
    <property type="match status" value="1"/>
</dbReference>
<dbReference type="Pfam" id="PF01630">
    <property type="entry name" value="Glyco_hydro_56"/>
    <property type="match status" value="1"/>
</dbReference>
<dbReference type="PIRSF" id="PIRSF038193">
    <property type="entry name" value="Hyaluronidase"/>
    <property type="match status" value="1"/>
</dbReference>
<dbReference type="PRINTS" id="PR00846">
    <property type="entry name" value="GLHYDRLASE56"/>
</dbReference>
<dbReference type="SUPFAM" id="SSF51445">
    <property type="entry name" value="(Trans)glycosidases"/>
    <property type="match status" value="1"/>
</dbReference>
<dbReference type="PROSITE" id="PS00022">
    <property type="entry name" value="EGF_1"/>
    <property type="match status" value="1"/>
</dbReference>
<dbReference type="PROSITE" id="PS01186">
    <property type="entry name" value="EGF_2"/>
    <property type="match status" value="1"/>
</dbReference>
<protein>
    <recommendedName>
        <fullName>Hyaluronidase-1</fullName>
        <shortName>Hy-1</shortName>
        <ecNumber>3.2.1.35</ecNumber>
    </recommendedName>
    <alternativeName>
        <fullName>Hyaluronoglucosaminidase-1</fullName>
    </alternativeName>
    <alternativeName>
        <fullName>Venom spreading factor</fullName>
    </alternativeName>
</protein>
<organism>
    <name type="scientific">Bitis arietans</name>
    <name type="common">African puff adder</name>
    <dbReference type="NCBI Taxonomy" id="8692"/>
    <lineage>
        <taxon>Eukaryota</taxon>
        <taxon>Metazoa</taxon>
        <taxon>Chordata</taxon>
        <taxon>Craniata</taxon>
        <taxon>Vertebrata</taxon>
        <taxon>Euteleostomi</taxon>
        <taxon>Lepidosauria</taxon>
        <taxon>Squamata</taxon>
        <taxon>Bifurcata</taxon>
        <taxon>Unidentata</taxon>
        <taxon>Episquamata</taxon>
        <taxon>Toxicofera</taxon>
        <taxon>Serpentes</taxon>
        <taxon>Colubroidea</taxon>
        <taxon>Viperidae</taxon>
        <taxon>Viperinae</taxon>
        <taxon>Bitis</taxon>
    </lineage>
</organism>
<evidence type="ECO:0000250" key="1"/>
<evidence type="ECO:0000255" key="2"/>
<evidence type="ECO:0000305" key="3"/>
<accession>A3QVN9</accession>
<name>HYAL1_BITAR</name>
<feature type="signal peptide" evidence="1">
    <location>
        <begin position="1"/>
        <end position="23"/>
    </location>
</feature>
<feature type="chain" id="PRO_0000420461" description="Hyaluronidase-1">
    <location>
        <begin position="24"/>
        <end position="449"/>
    </location>
</feature>
<feature type="domain" description="EGF-like">
    <location>
        <begin position="427"/>
        <end position="438"/>
    </location>
</feature>
<feature type="active site" description="Proton donor" evidence="1">
    <location>
        <position position="135"/>
    </location>
</feature>
<feature type="glycosylation site" description="N-linked (GlcNAc...) asparagine" evidence="2">
    <location>
        <position position="67"/>
    </location>
</feature>
<feature type="glycosylation site" description="N-linked (GlcNAc...) asparagine" evidence="2">
    <location>
        <position position="103"/>
    </location>
</feature>
<feature type="glycosylation site" description="N-linked (GlcNAc...) asparagine" evidence="2">
    <location>
        <position position="111"/>
    </location>
</feature>
<feature type="glycosylation site" description="N-linked (GlcNAc...) asparagine" evidence="2">
    <location>
        <position position="153"/>
    </location>
</feature>
<feature type="glycosylation site" description="N-linked (GlcNAc...) asparagine" evidence="2">
    <location>
        <position position="357"/>
    </location>
</feature>
<feature type="glycosylation site" description="N-linked (GlcNAc...) asparagine" evidence="2">
    <location>
        <position position="401"/>
    </location>
</feature>
<feature type="disulfide bond" evidence="1">
    <location>
        <begin position="47"/>
        <end position="340"/>
    </location>
</feature>
<feature type="disulfide bond" evidence="1">
    <location>
        <begin position="211"/>
        <end position="227"/>
    </location>
</feature>
<feature type="disulfide bond" evidence="1">
    <location>
        <begin position="365"/>
        <end position="376"/>
    </location>
</feature>
<feature type="disulfide bond" evidence="1">
    <location>
        <begin position="370"/>
        <end position="427"/>
    </location>
</feature>
<feature type="disulfide bond" evidence="1">
    <location>
        <begin position="429"/>
        <end position="438"/>
    </location>
</feature>
<reference key="1">
    <citation type="journal article" date="2007" name="Gene">
        <title>Identification of cDNAs encoding viper venom hyaluronidases: cross-generic sequence conservation of full-length and unusually short variant transcripts.</title>
        <authorList>
            <person name="Harrison R.A."/>
            <person name="Ibison F."/>
            <person name="Wilbraham D."/>
            <person name="Wagstaff S.C."/>
        </authorList>
    </citation>
    <scope>NUCLEOTIDE SEQUENCE [MRNA]</scope>
    <source>
        <tissue>Venom gland</tissue>
    </source>
</reference>
<keyword id="KW-1015">Disulfide bond</keyword>
<keyword id="KW-0245">EGF-like domain</keyword>
<keyword id="KW-0325">Glycoprotein</keyword>
<keyword id="KW-0326">Glycosidase</keyword>
<keyword id="KW-0378">Hydrolase</keyword>
<keyword id="KW-0964">Secreted</keyword>
<keyword id="KW-0732">Signal</keyword>
<sequence length="449" mass="52312">MYHLWIKCLAAWIFLKRCNGVHAMPAKAPMYPNEPFIVLWNAPTTQCPLRYKVDLDLKTFHIVANPNDSLSGSVVTIFYPNHLGVYPHIDERGHFFHGIIPQNESLTKHLNKSKSDINRMIPLKTFHGLGVIDWENWRPQWDRNWGSKNVYRNRSIQFAKELHPELSEDKIKRLAKKEYEKAAKSFMRDTLLLAEEMRPNGYWGYYLYPDCQNYDYKTKGDQYTGKCPDIEMSRNDQLLWLWRDSTALFPNVYLEIILRSSDNALKFVHHRLKESMRIASMAREDYALPVFVYARPFYAYTFEPLTQEDLVTTVGETAAMGAAGIVFWGSMQYASTVDSCQKVKTYMNGPLGRYIVNVTTAAKICSHALCRKNGRCVRKHSDSNAFLHLFPESFRIMVHANATEKKAIVKGKLELKDLIYLRKNFMCQCYQGWKGLYCEEYSIKDIRKI</sequence>